<feature type="chain" id="PRO_1000122769" description="UDP-3-O-acyl-N-acetylglucosamine deacetylase">
    <location>
        <begin position="1"/>
        <end position="305"/>
    </location>
</feature>
<feature type="active site" description="Proton donor" evidence="1">
    <location>
        <position position="264"/>
    </location>
</feature>
<feature type="binding site" evidence="1">
    <location>
        <position position="78"/>
    </location>
    <ligand>
        <name>Zn(2+)</name>
        <dbReference type="ChEBI" id="CHEBI:29105"/>
    </ligand>
</feature>
<feature type="binding site" evidence="1">
    <location>
        <position position="237"/>
    </location>
    <ligand>
        <name>Zn(2+)</name>
        <dbReference type="ChEBI" id="CHEBI:29105"/>
    </ligand>
</feature>
<feature type="binding site" evidence="1">
    <location>
        <position position="241"/>
    </location>
    <ligand>
        <name>Zn(2+)</name>
        <dbReference type="ChEBI" id="CHEBI:29105"/>
    </ligand>
</feature>
<proteinExistence type="inferred from homology"/>
<protein>
    <recommendedName>
        <fullName evidence="1">UDP-3-O-acyl-N-acetylglucosamine deacetylase</fullName>
        <shortName evidence="1">UDP-3-O-acyl-GlcNAc deacetylase</shortName>
        <ecNumber evidence="1">3.5.1.108</ecNumber>
    </recommendedName>
    <alternativeName>
        <fullName evidence="1">UDP-3-O-[R-3-hydroxymyristoyl]-N-acetylglucosamine deacetylase</fullName>
    </alternativeName>
</protein>
<gene>
    <name evidence="1" type="primary">lpxC</name>
    <name type="ordered locus">Bphy_2666</name>
</gene>
<keyword id="KW-0378">Hydrolase</keyword>
<keyword id="KW-0441">Lipid A biosynthesis</keyword>
<keyword id="KW-0444">Lipid biosynthesis</keyword>
<keyword id="KW-0443">Lipid metabolism</keyword>
<keyword id="KW-0479">Metal-binding</keyword>
<keyword id="KW-1185">Reference proteome</keyword>
<keyword id="KW-0862">Zinc</keyword>
<sequence length="305" mass="33613">MLKQRTIKQIVKTVGIGLHSGRKVNLTLRPAAPDTGIVFCRVDLPTPVDIPASAMAIGDTRLASVLQKDGARVSTIEHLMSACAGLGIDNLYVDVTAEEIPIMDGSAASFVFLIQSAGIEEQNAAKKFIKVTKPVEIRDGDKFARLDPYFGFKLKFTIDFRHPAVDKTGQALEVDFANTSYVREIARARTFGFAHEVEMMRELGLARGGSMDNAIVLDEYRILNNDGLRYDDEFVKHKMLDAIGDLYVVGHPLLAAYDAYKSGHGLNNALLRELLAHEDSYEIVTFDDPLKAPRGFAYDTQTAFA</sequence>
<dbReference type="EC" id="3.5.1.108" evidence="1"/>
<dbReference type="EMBL" id="CP001043">
    <property type="protein sequence ID" value="ACC71838.1"/>
    <property type="molecule type" value="Genomic_DNA"/>
</dbReference>
<dbReference type="RefSeq" id="WP_012402038.1">
    <property type="nucleotide sequence ID" value="NC_010622.1"/>
</dbReference>
<dbReference type="SMR" id="B2JHF3"/>
<dbReference type="STRING" id="391038.Bphy_2666"/>
<dbReference type="KEGG" id="bph:Bphy_2666"/>
<dbReference type="eggNOG" id="COG0774">
    <property type="taxonomic scope" value="Bacteria"/>
</dbReference>
<dbReference type="HOGENOM" id="CLU_046528_1_0_4"/>
<dbReference type="OrthoDB" id="9802746at2"/>
<dbReference type="UniPathway" id="UPA00359">
    <property type="reaction ID" value="UER00478"/>
</dbReference>
<dbReference type="Proteomes" id="UP000001192">
    <property type="component" value="Chromosome 1"/>
</dbReference>
<dbReference type="GO" id="GO:0016020">
    <property type="term" value="C:membrane"/>
    <property type="evidence" value="ECO:0007669"/>
    <property type="project" value="GOC"/>
</dbReference>
<dbReference type="GO" id="GO:0046872">
    <property type="term" value="F:metal ion binding"/>
    <property type="evidence" value="ECO:0007669"/>
    <property type="project" value="UniProtKB-KW"/>
</dbReference>
<dbReference type="GO" id="GO:0103117">
    <property type="term" value="F:UDP-3-O-acyl-N-acetylglucosamine deacetylase activity"/>
    <property type="evidence" value="ECO:0007669"/>
    <property type="project" value="UniProtKB-UniRule"/>
</dbReference>
<dbReference type="GO" id="GO:0009245">
    <property type="term" value="P:lipid A biosynthetic process"/>
    <property type="evidence" value="ECO:0007669"/>
    <property type="project" value="UniProtKB-UniRule"/>
</dbReference>
<dbReference type="Gene3D" id="3.30.230.20">
    <property type="entry name" value="lpxc deacetylase, domain 1"/>
    <property type="match status" value="1"/>
</dbReference>
<dbReference type="Gene3D" id="3.30.1700.10">
    <property type="entry name" value="lpxc deacetylase, domain 2"/>
    <property type="match status" value="1"/>
</dbReference>
<dbReference type="HAMAP" id="MF_00388">
    <property type="entry name" value="LpxC"/>
    <property type="match status" value="1"/>
</dbReference>
<dbReference type="InterPro" id="IPR020568">
    <property type="entry name" value="Ribosomal_Su5_D2-typ_SF"/>
</dbReference>
<dbReference type="InterPro" id="IPR004463">
    <property type="entry name" value="UDP-acyl_GlcNac_deAcase"/>
</dbReference>
<dbReference type="InterPro" id="IPR011334">
    <property type="entry name" value="UDP-acyl_GlcNac_deAcase_C"/>
</dbReference>
<dbReference type="InterPro" id="IPR015870">
    <property type="entry name" value="UDP-acyl_N-AcGlcN_deAcase_N"/>
</dbReference>
<dbReference type="NCBIfam" id="TIGR00325">
    <property type="entry name" value="lpxC"/>
    <property type="match status" value="1"/>
</dbReference>
<dbReference type="PANTHER" id="PTHR33694">
    <property type="entry name" value="UDP-3-O-ACYL-N-ACETYLGLUCOSAMINE DEACETYLASE 1, MITOCHONDRIAL-RELATED"/>
    <property type="match status" value="1"/>
</dbReference>
<dbReference type="PANTHER" id="PTHR33694:SF1">
    <property type="entry name" value="UDP-3-O-ACYL-N-ACETYLGLUCOSAMINE DEACETYLASE 1, MITOCHONDRIAL-RELATED"/>
    <property type="match status" value="1"/>
</dbReference>
<dbReference type="Pfam" id="PF03331">
    <property type="entry name" value="LpxC"/>
    <property type="match status" value="1"/>
</dbReference>
<dbReference type="SUPFAM" id="SSF54211">
    <property type="entry name" value="Ribosomal protein S5 domain 2-like"/>
    <property type="match status" value="2"/>
</dbReference>
<comment type="function">
    <text evidence="1">Catalyzes the hydrolysis of UDP-3-O-myristoyl-N-acetylglucosamine to form UDP-3-O-myristoylglucosamine and acetate, the committed step in lipid A biosynthesis.</text>
</comment>
<comment type="catalytic activity">
    <reaction evidence="1">
        <text>a UDP-3-O-[(3R)-3-hydroxyacyl]-N-acetyl-alpha-D-glucosamine + H2O = a UDP-3-O-[(3R)-3-hydroxyacyl]-alpha-D-glucosamine + acetate</text>
        <dbReference type="Rhea" id="RHEA:67816"/>
        <dbReference type="ChEBI" id="CHEBI:15377"/>
        <dbReference type="ChEBI" id="CHEBI:30089"/>
        <dbReference type="ChEBI" id="CHEBI:137740"/>
        <dbReference type="ChEBI" id="CHEBI:173225"/>
        <dbReference type="EC" id="3.5.1.108"/>
    </reaction>
</comment>
<comment type="cofactor">
    <cofactor evidence="1">
        <name>Zn(2+)</name>
        <dbReference type="ChEBI" id="CHEBI:29105"/>
    </cofactor>
</comment>
<comment type="pathway">
    <text evidence="1">Glycolipid biosynthesis; lipid IV(A) biosynthesis; lipid IV(A) from (3R)-3-hydroxytetradecanoyl-[acyl-carrier-protein] and UDP-N-acetyl-alpha-D-glucosamine: step 2/6.</text>
</comment>
<comment type="similarity">
    <text evidence="1">Belongs to the LpxC family.</text>
</comment>
<evidence type="ECO:0000255" key="1">
    <source>
        <dbReference type="HAMAP-Rule" id="MF_00388"/>
    </source>
</evidence>
<organism>
    <name type="scientific">Paraburkholderia phymatum (strain DSM 17167 / CIP 108236 / LMG 21445 / STM815)</name>
    <name type="common">Burkholderia phymatum</name>
    <dbReference type="NCBI Taxonomy" id="391038"/>
    <lineage>
        <taxon>Bacteria</taxon>
        <taxon>Pseudomonadati</taxon>
        <taxon>Pseudomonadota</taxon>
        <taxon>Betaproteobacteria</taxon>
        <taxon>Burkholderiales</taxon>
        <taxon>Burkholderiaceae</taxon>
        <taxon>Paraburkholderia</taxon>
    </lineage>
</organism>
<accession>B2JHF3</accession>
<name>LPXC_PARP8</name>
<reference key="1">
    <citation type="journal article" date="2014" name="Stand. Genomic Sci.">
        <title>Complete genome sequence of Burkholderia phymatum STM815(T), a broad host range and efficient nitrogen-fixing symbiont of Mimosa species.</title>
        <authorList>
            <person name="Moulin L."/>
            <person name="Klonowska A."/>
            <person name="Caroline B."/>
            <person name="Booth K."/>
            <person name="Vriezen J.A."/>
            <person name="Melkonian R."/>
            <person name="James E.K."/>
            <person name="Young J.P."/>
            <person name="Bena G."/>
            <person name="Hauser L."/>
            <person name="Land M."/>
            <person name="Kyrpides N."/>
            <person name="Bruce D."/>
            <person name="Chain P."/>
            <person name="Copeland A."/>
            <person name="Pitluck S."/>
            <person name="Woyke T."/>
            <person name="Lizotte-Waniewski M."/>
            <person name="Bristow J."/>
            <person name="Riley M."/>
        </authorList>
    </citation>
    <scope>NUCLEOTIDE SEQUENCE [LARGE SCALE GENOMIC DNA]</scope>
    <source>
        <strain>DSM 17167 / CIP 108236 / LMG 21445 / STM815</strain>
    </source>
</reference>